<proteinExistence type="inferred from homology"/>
<reference key="1">
    <citation type="journal article" date="2002" name="Nat. Genet.">
        <title>Genome sequence of the endocellular obligate symbiont of tsetse flies, Wigglesworthia glossinidia.</title>
        <authorList>
            <person name="Akman L."/>
            <person name="Yamashita A."/>
            <person name="Watanabe H."/>
            <person name="Oshima K."/>
            <person name="Shiba T."/>
            <person name="Hattori M."/>
            <person name="Aksoy S."/>
        </authorList>
    </citation>
    <scope>NUCLEOTIDE SEQUENCE [LARGE SCALE GENOMIC DNA]</scope>
</reference>
<comment type="function">
    <text evidence="1">Catalyzes the phosphorylation of the position 2 hydroxy group of 4-diphosphocytidyl-2C-methyl-D-erythritol.</text>
</comment>
<comment type="catalytic activity">
    <reaction evidence="1">
        <text>4-CDP-2-C-methyl-D-erythritol + ATP = 4-CDP-2-C-methyl-D-erythritol 2-phosphate + ADP + H(+)</text>
        <dbReference type="Rhea" id="RHEA:18437"/>
        <dbReference type="ChEBI" id="CHEBI:15378"/>
        <dbReference type="ChEBI" id="CHEBI:30616"/>
        <dbReference type="ChEBI" id="CHEBI:57823"/>
        <dbReference type="ChEBI" id="CHEBI:57919"/>
        <dbReference type="ChEBI" id="CHEBI:456216"/>
        <dbReference type="EC" id="2.7.1.148"/>
    </reaction>
</comment>
<comment type="pathway">
    <text evidence="1">Isoprenoid biosynthesis; isopentenyl diphosphate biosynthesis via DXP pathway; isopentenyl diphosphate from 1-deoxy-D-xylulose 5-phosphate: step 3/6.</text>
</comment>
<comment type="subunit">
    <text evidence="1">Homodimer.</text>
</comment>
<comment type="similarity">
    <text evidence="1">Belongs to the GHMP kinase family. IspE subfamily.</text>
</comment>
<keyword id="KW-0067">ATP-binding</keyword>
<keyword id="KW-0414">Isoprene biosynthesis</keyword>
<keyword id="KW-0418">Kinase</keyword>
<keyword id="KW-0547">Nucleotide-binding</keyword>
<keyword id="KW-1185">Reference proteome</keyword>
<keyword id="KW-0808">Transferase</keyword>
<accession>Q8D2K6</accession>
<evidence type="ECO:0000255" key="1">
    <source>
        <dbReference type="HAMAP-Rule" id="MF_00061"/>
    </source>
</evidence>
<gene>
    <name evidence="1" type="primary">ispE</name>
    <name type="ordered locus">WIGBR3480</name>
</gene>
<feature type="chain" id="PRO_0000189289" description="4-diphosphocytidyl-2-C-methyl-D-erythritol kinase">
    <location>
        <begin position="1"/>
        <end position="304"/>
    </location>
</feature>
<feature type="active site" evidence="1">
    <location>
        <position position="23"/>
    </location>
</feature>
<feature type="active site" evidence="1">
    <location>
        <position position="153"/>
    </location>
</feature>
<feature type="binding site" evidence="1">
    <location>
        <begin position="111"/>
        <end position="121"/>
    </location>
    <ligand>
        <name>ATP</name>
        <dbReference type="ChEBI" id="CHEBI:30616"/>
    </ligand>
</feature>
<sequence length="304" mass="34682">MHFNNKNKSLDCLNTKIWPSPAKINLFLSVTGIRKDGYHFIQTLFQFLNYGDYLIFNTTSDKKIKLINKIHGIRNENNLIIRAAKSLKDFMWKNKNHDTPGVKIFIKKYIPIGGGLGGGSSNAATTLIALNEHWKCKLSLNTLADLGLQIGIDIPVFIYGKSAFAEGIGEKLSLFQPKEKFYLIVIPPIKISTKLIFNKFILNKKSYLKSCNQYLKKPLKNDFEPMIRKNFIIIDNLINYLSKFSNFRLTGTGSCIFSEFDSECKAKEILYKLPNKIKGFVSKGTNISYLKEILKIRSNFNVLS</sequence>
<dbReference type="EC" id="2.7.1.148" evidence="1"/>
<dbReference type="EMBL" id="BA000021">
    <property type="protein sequence ID" value="BAC24494.1"/>
    <property type="molecule type" value="Genomic_DNA"/>
</dbReference>
<dbReference type="SMR" id="Q8D2K6"/>
<dbReference type="STRING" id="36870.gene:10368848"/>
<dbReference type="KEGG" id="wbr:ychB"/>
<dbReference type="eggNOG" id="COG1947">
    <property type="taxonomic scope" value="Bacteria"/>
</dbReference>
<dbReference type="HOGENOM" id="CLU_053057_3_0_6"/>
<dbReference type="OrthoDB" id="9809438at2"/>
<dbReference type="UniPathway" id="UPA00056">
    <property type="reaction ID" value="UER00094"/>
</dbReference>
<dbReference type="Proteomes" id="UP000000562">
    <property type="component" value="Chromosome"/>
</dbReference>
<dbReference type="GO" id="GO:0050515">
    <property type="term" value="F:4-(cytidine 5'-diphospho)-2-C-methyl-D-erythritol kinase activity"/>
    <property type="evidence" value="ECO:0007669"/>
    <property type="project" value="UniProtKB-UniRule"/>
</dbReference>
<dbReference type="GO" id="GO:0005524">
    <property type="term" value="F:ATP binding"/>
    <property type="evidence" value="ECO:0007669"/>
    <property type="project" value="UniProtKB-UniRule"/>
</dbReference>
<dbReference type="GO" id="GO:0019288">
    <property type="term" value="P:isopentenyl diphosphate biosynthetic process, methylerythritol 4-phosphate pathway"/>
    <property type="evidence" value="ECO:0007669"/>
    <property type="project" value="UniProtKB-UniRule"/>
</dbReference>
<dbReference type="GO" id="GO:0016114">
    <property type="term" value="P:terpenoid biosynthetic process"/>
    <property type="evidence" value="ECO:0007669"/>
    <property type="project" value="InterPro"/>
</dbReference>
<dbReference type="Gene3D" id="3.30.230.10">
    <property type="match status" value="1"/>
</dbReference>
<dbReference type="Gene3D" id="3.30.70.890">
    <property type="entry name" value="GHMP kinase, C-terminal domain"/>
    <property type="match status" value="1"/>
</dbReference>
<dbReference type="HAMAP" id="MF_00061">
    <property type="entry name" value="IspE"/>
    <property type="match status" value="1"/>
</dbReference>
<dbReference type="InterPro" id="IPR013750">
    <property type="entry name" value="GHMP_kinase_C_dom"/>
</dbReference>
<dbReference type="InterPro" id="IPR036554">
    <property type="entry name" value="GHMP_kinase_C_sf"/>
</dbReference>
<dbReference type="InterPro" id="IPR006204">
    <property type="entry name" value="GHMP_kinase_N_dom"/>
</dbReference>
<dbReference type="InterPro" id="IPR004424">
    <property type="entry name" value="IspE"/>
</dbReference>
<dbReference type="InterPro" id="IPR020568">
    <property type="entry name" value="Ribosomal_Su5_D2-typ_SF"/>
</dbReference>
<dbReference type="InterPro" id="IPR014721">
    <property type="entry name" value="Ribsml_uS5_D2-typ_fold_subgr"/>
</dbReference>
<dbReference type="NCBIfam" id="TIGR00154">
    <property type="entry name" value="ispE"/>
    <property type="match status" value="1"/>
</dbReference>
<dbReference type="PANTHER" id="PTHR43527">
    <property type="entry name" value="4-DIPHOSPHOCYTIDYL-2-C-METHYL-D-ERYTHRITOL KINASE, CHLOROPLASTIC"/>
    <property type="match status" value="1"/>
</dbReference>
<dbReference type="PANTHER" id="PTHR43527:SF2">
    <property type="entry name" value="4-DIPHOSPHOCYTIDYL-2-C-METHYL-D-ERYTHRITOL KINASE, CHLOROPLASTIC"/>
    <property type="match status" value="1"/>
</dbReference>
<dbReference type="Pfam" id="PF08544">
    <property type="entry name" value="GHMP_kinases_C"/>
    <property type="match status" value="1"/>
</dbReference>
<dbReference type="Pfam" id="PF00288">
    <property type="entry name" value="GHMP_kinases_N"/>
    <property type="match status" value="1"/>
</dbReference>
<dbReference type="PIRSF" id="PIRSF010376">
    <property type="entry name" value="IspE"/>
    <property type="match status" value="1"/>
</dbReference>
<dbReference type="SUPFAM" id="SSF55060">
    <property type="entry name" value="GHMP Kinase, C-terminal domain"/>
    <property type="match status" value="1"/>
</dbReference>
<dbReference type="SUPFAM" id="SSF54211">
    <property type="entry name" value="Ribosomal protein S5 domain 2-like"/>
    <property type="match status" value="1"/>
</dbReference>
<organism>
    <name type="scientific">Wigglesworthia glossinidia brevipalpis</name>
    <dbReference type="NCBI Taxonomy" id="36870"/>
    <lineage>
        <taxon>Bacteria</taxon>
        <taxon>Pseudomonadati</taxon>
        <taxon>Pseudomonadota</taxon>
        <taxon>Gammaproteobacteria</taxon>
        <taxon>Enterobacterales</taxon>
        <taxon>Erwiniaceae</taxon>
        <taxon>Wigglesworthia</taxon>
    </lineage>
</organism>
<protein>
    <recommendedName>
        <fullName evidence="1">4-diphosphocytidyl-2-C-methyl-D-erythritol kinase</fullName>
        <shortName evidence="1">CMK</shortName>
        <ecNumber evidence="1">2.7.1.148</ecNumber>
    </recommendedName>
    <alternativeName>
        <fullName evidence="1">4-(cytidine-5'-diphospho)-2-C-methyl-D-erythritol kinase</fullName>
    </alternativeName>
</protein>
<name>ISPE_WIGBR</name>